<gene>
    <name evidence="1" type="primary">rpsS</name>
    <name type="ordered locus">XOO3383</name>
</gene>
<keyword id="KW-0687">Ribonucleoprotein</keyword>
<keyword id="KW-0689">Ribosomal protein</keyword>
<keyword id="KW-0694">RNA-binding</keyword>
<keyword id="KW-0699">rRNA-binding</keyword>
<feature type="chain" id="PRO_0000265466" description="Small ribosomal subunit protein uS19">
    <location>
        <begin position="1"/>
        <end position="89"/>
    </location>
</feature>
<name>RS19_XANOM</name>
<accession>Q2NZY9</accession>
<reference key="1">
    <citation type="journal article" date="2005" name="Jpn. Agric. Res. Q.">
        <title>Genome sequence of Xanthomonas oryzae pv. oryzae suggests contribution of large numbers of effector genes and insertion sequences to its race diversity.</title>
        <authorList>
            <person name="Ochiai H."/>
            <person name="Inoue Y."/>
            <person name="Takeya M."/>
            <person name="Sasaki A."/>
            <person name="Kaku H."/>
        </authorList>
    </citation>
    <scope>NUCLEOTIDE SEQUENCE [LARGE SCALE GENOMIC DNA]</scope>
    <source>
        <strain>MAFF 311018</strain>
    </source>
</reference>
<evidence type="ECO:0000255" key="1">
    <source>
        <dbReference type="HAMAP-Rule" id="MF_00531"/>
    </source>
</evidence>
<evidence type="ECO:0000305" key="2"/>
<proteinExistence type="inferred from homology"/>
<protein>
    <recommendedName>
        <fullName evidence="1">Small ribosomal subunit protein uS19</fullName>
    </recommendedName>
    <alternativeName>
        <fullName evidence="2">30S ribosomal protein S19</fullName>
    </alternativeName>
</protein>
<sequence>MARSLKKGPFVDHHLAKKVESAAGSKKPIKTWSRRSMILPEMVGITIAVHNGKNHIPVLVNENMVGHKLGEFAVTRTFKGHGGDKKSSR</sequence>
<dbReference type="EMBL" id="AP008229">
    <property type="protein sequence ID" value="BAE70138.1"/>
    <property type="molecule type" value="Genomic_DNA"/>
</dbReference>
<dbReference type="RefSeq" id="WP_005993369.1">
    <property type="nucleotide sequence ID" value="NC_007705.1"/>
</dbReference>
<dbReference type="SMR" id="Q2NZY9"/>
<dbReference type="GeneID" id="97210508"/>
<dbReference type="KEGG" id="xom:XOO3383"/>
<dbReference type="HOGENOM" id="CLU_144911_0_1_6"/>
<dbReference type="GO" id="GO:0005737">
    <property type="term" value="C:cytoplasm"/>
    <property type="evidence" value="ECO:0007669"/>
    <property type="project" value="UniProtKB-ARBA"/>
</dbReference>
<dbReference type="GO" id="GO:0015935">
    <property type="term" value="C:small ribosomal subunit"/>
    <property type="evidence" value="ECO:0007669"/>
    <property type="project" value="InterPro"/>
</dbReference>
<dbReference type="GO" id="GO:0019843">
    <property type="term" value="F:rRNA binding"/>
    <property type="evidence" value="ECO:0007669"/>
    <property type="project" value="UniProtKB-UniRule"/>
</dbReference>
<dbReference type="GO" id="GO:0003735">
    <property type="term" value="F:structural constituent of ribosome"/>
    <property type="evidence" value="ECO:0007669"/>
    <property type="project" value="InterPro"/>
</dbReference>
<dbReference type="GO" id="GO:0000028">
    <property type="term" value="P:ribosomal small subunit assembly"/>
    <property type="evidence" value="ECO:0007669"/>
    <property type="project" value="TreeGrafter"/>
</dbReference>
<dbReference type="GO" id="GO:0006412">
    <property type="term" value="P:translation"/>
    <property type="evidence" value="ECO:0007669"/>
    <property type="project" value="UniProtKB-UniRule"/>
</dbReference>
<dbReference type="FunFam" id="3.30.860.10:FF:000001">
    <property type="entry name" value="30S ribosomal protein S19"/>
    <property type="match status" value="1"/>
</dbReference>
<dbReference type="Gene3D" id="3.30.860.10">
    <property type="entry name" value="30s Ribosomal Protein S19, Chain A"/>
    <property type="match status" value="1"/>
</dbReference>
<dbReference type="HAMAP" id="MF_00531">
    <property type="entry name" value="Ribosomal_uS19"/>
    <property type="match status" value="1"/>
</dbReference>
<dbReference type="InterPro" id="IPR002222">
    <property type="entry name" value="Ribosomal_uS19"/>
</dbReference>
<dbReference type="InterPro" id="IPR005732">
    <property type="entry name" value="Ribosomal_uS19_bac-type"/>
</dbReference>
<dbReference type="InterPro" id="IPR020934">
    <property type="entry name" value="Ribosomal_uS19_CS"/>
</dbReference>
<dbReference type="InterPro" id="IPR023575">
    <property type="entry name" value="Ribosomal_uS19_SF"/>
</dbReference>
<dbReference type="NCBIfam" id="TIGR01050">
    <property type="entry name" value="rpsS_bact"/>
    <property type="match status" value="1"/>
</dbReference>
<dbReference type="PANTHER" id="PTHR11880">
    <property type="entry name" value="RIBOSOMAL PROTEIN S19P FAMILY MEMBER"/>
    <property type="match status" value="1"/>
</dbReference>
<dbReference type="PANTHER" id="PTHR11880:SF8">
    <property type="entry name" value="SMALL RIBOSOMAL SUBUNIT PROTEIN US19M"/>
    <property type="match status" value="1"/>
</dbReference>
<dbReference type="Pfam" id="PF00203">
    <property type="entry name" value="Ribosomal_S19"/>
    <property type="match status" value="1"/>
</dbReference>
<dbReference type="PIRSF" id="PIRSF002144">
    <property type="entry name" value="Ribosomal_S19"/>
    <property type="match status" value="1"/>
</dbReference>
<dbReference type="PRINTS" id="PR00975">
    <property type="entry name" value="RIBOSOMALS19"/>
</dbReference>
<dbReference type="SUPFAM" id="SSF54570">
    <property type="entry name" value="Ribosomal protein S19"/>
    <property type="match status" value="1"/>
</dbReference>
<dbReference type="PROSITE" id="PS00323">
    <property type="entry name" value="RIBOSOMAL_S19"/>
    <property type="match status" value="1"/>
</dbReference>
<organism>
    <name type="scientific">Xanthomonas oryzae pv. oryzae (strain MAFF 311018)</name>
    <dbReference type="NCBI Taxonomy" id="342109"/>
    <lineage>
        <taxon>Bacteria</taxon>
        <taxon>Pseudomonadati</taxon>
        <taxon>Pseudomonadota</taxon>
        <taxon>Gammaproteobacteria</taxon>
        <taxon>Lysobacterales</taxon>
        <taxon>Lysobacteraceae</taxon>
        <taxon>Xanthomonas</taxon>
    </lineage>
</organism>
<comment type="function">
    <text evidence="1">Protein S19 forms a complex with S13 that binds strongly to the 16S ribosomal RNA.</text>
</comment>
<comment type="similarity">
    <text evidence="1">Belongs to the universal ribosomal protein uS19 family.</text>
</comment>